<evidence type="ECO:0000255" key="1">
    <source>
        <dbReference type="HAMAP-Rule" id="MF_00421"/>
    </source>
</evidence>
<sequence>MKFAVLVFPGSNCDRDMYNAAIKSGVDAAYVDYRETTLDGFDGVLIPGGFSFGDYLRSGAMASVAPIIKEVKRFAKEGKPVLGVCNGFQILTEIGLLPGALLHNDSHLFISRNETLKITNNQTPFTHLYVKNENVVYPVAHGEGHYYCTDEIYRELNDNNQIILKYTNNPNGSYEDIAGIVNKEGNVCGMMPHPERALETLLGTNSGVKLFESMVKSWREQNV</sequence>
<protein>
    <recommendedName>
        <fullName evidence="1">Phosphoribosylformylglycinamidine synthase subunit PurQ</fullName>
        <shortName evidence="1">FGAM synthase</shortName>
        <ecNumber evidence="1">6.3.5.3</ecNumber>
    </recommendedName>
    <alternativeName>
        <fullName evidence="1">Formylglycinamide ribonucleotide amidotransferase subunit I</fullName>
        <shortName evidence="1">FGAR amidotransferase I</shortName>
        <shortName evidence="1">FGAR-AT I</shortName>
    </alternativeName>
    <alternativeName>
        <fullName evidence="1">Glutaminase PurQ</fullName>
        <ecNumber evidence="1">3.5.1.2</ecNumber>
    </alternativeName>
    <alternativeName>
        <fullName evidence="1">Phosphoribosylformylglycinamidine synthase subunit I</fullName>
    </alternativeName>
</protein>
<organism>
    <name type="scientific">Staphylococcus epidermidis (strain ATCC 35984 / DSM 28319 / BCRC 17069 / CCUG 31568 / BM 3577 / RP62A)</name>
    <dbReference type="NCBI Taxonomy" id="176279"/>
    <lineage>
        <taxon>Bacteria</taxon>
        <taxon>Bacillati</taxon>
        <taxon>Bacillota</taxon>
        <taxon>Bacilli</taxon>
        <taxon>Bacillales</taxon>
        <taxon>Staphylococcaceae</taxon>
        <taxon>Staphylococcus</taxon>
    </lineage>
</organism>
<name>PURQ_STAEQ</name>
<gene>
    <name evidence="1" type="primary">purQ</name>
    <name type="ordered locus">SERP0653</name>
</gene>
<reference key="1">
    <citation type="journal article" date="2005" name="J. Bacteriol.">
        <title>Insights on evolution of virulence and resistance from the complete genome analysis of an early methicillin-resistant Staphylococcus aureus strain and a biofilm-producing methicillin-resistant Staphylococcus epidermidis strain.</title>
        <authorList>
            <person name="Gill S.R."/>
            <person name="Fouts D.E."/>
            <person name="Archer G.L."/>
            <person name="Mongodin E.F."/>
            <person name="DeBoy R.T."/>
            <person name="Ravel J."/>
            <person name="Paulsen I.T."/>
            <person name="Kolonay J.F."/>
            <person name="Brinkac L.M."/>
            <person name="Beanan M.J."/>
            <person name="Dodson R.J."/>
            <person name="Daugherty S.C."/>
            <person name="Madupu R."/>
            <person name="Angiuoli S.V."/>
            <person name="Durkin A.S."/>
            <person name="Haft D.H."/>
            <person name="Vamathevan J.J."/>
            <person name="Khouri H."/>
            <person name="Utterback T.R."/>
            <person name="Lee C."/>
            <person name="Dimitrov G."/>
            <person name="Jiang L."/>
            <person name="Qin H."/>
            <person name="Weidman J."/>
            <person name="Tran K."/>
            <person name="Kang K.H."/>
            <person name="Hance I.R."/>
            <person name="Nelson K.E."/>
            <person name="Fraser C.M."/>
        </authorList>
    </citation>
    <scope>NUCLEOTIDE SEQUENCE [LARGE SCALE GENOMIC DNA]</scope>
    <source>
        <strain>ATCC 35984 / DSM 28319 / BCRC 17069 / CCUG 31568 / BM 3577 / RP62A</strain>
    </source>
</reference>
<feature type="chain" id="PRO_0000100590" description="Phosphoribosylformylglycinamidine synthase subunit PurQ">
    <location>
        <begin position="1"/>
        <end position="223"/>
    </location>
</feature>
<feature type="domain" description="Glutamine amidotransferase type-1" evidence="1">
    <location>
        <begin position="3"/>
        <end position="223"/>
    </location>
</feature>
<feature type="active site" description="Nucleophile" evidence="1">
    <location>
        <position position="85"/>
    </location>
</feature>
<feature type="active site" evidence="1">
    <location>
        <position position="193"/>
    </location>
</feature>
<feature type="active site" evidence="1">
    <location>
        <position position="195"/>
    </location>
</feature>
<comment type="function">
    <text evidence="1">Part of the phosphoribosylformylglycinamidine synthase complex involved in the purines biosynthetic pathway. Catalyzes the ATP-dependent conversion of formylglycinamide ribonucleotide (FGAR) and glutamine to yield formylglycinamidine ribonucleotide (FGAM) and glutamate. The FGAM synthase complex is composed of three subunits. PurQ produces an ammonia molecule by converting glutamine to glutamate. PurL transfers the ammonia molecule to FGAR to form FGAM in an ATP-dependent manner. PurS interacts with PurQ and PurL and is thought to assist in the transfer of the ammonia molecule from PurQ to PurL.</text>
</comment>
<comment type="catalytic activity">
    <reaction evidence="1">
        <text>N(2)-formyl-N(1)-(5-phospho-beta-D-ribosyl)glycinamide + L-glutamine + ATP + H2O = 2-formamido-N(1)-(5-O-phospho-beta-D-ribosyl)acetamidine + L-glutamate + ADP + phosphate + H(+)</text>
        <dbReference type="Rhea" id="RHEA:17129"/>
        <dbReference type="ChEBI" id="CHEBI:15377"/>
        <dbReference type="ChEBI" id="CHEBI:15378"/>
        <dbReference type="ChEBI" id="CHEBI:29985"/>
        <dbReference type="ChEBI" id="CHEBI:30616"/>
        <dbReference type="ChEBI" id="CHEBI:43474"/>
        <dbReference type="ChEBI" id="CHEBI:58359"/>
        <dbReference type="ChEBI" id="CHEBI:147286"/>
        <dbReference type="ChEBI" id="CHEBI:147287"/>
        <dbReference type="ChEBI" id="CHEBI:456216"/>
        <dbReference type="EC" id="6.3.5.3"/>
    </reaction>
</comment>
<comment type="catalytic activity">
    <reaction evidence="1">
        <text>L-glutamine + H2O = L-glutamate + NH4(+)</text>
        <dbReference type="Rhea" id="RHEA:15889"/>
        <dbReference type="ChEBI" id="CHEBI:15377"/>
        <dbReference type="ChEBI" id="CHEBI:28938"/>
        <dbReference type="ChEBI" id="CHEBI:29985"/>
        <dbReference type="ChEBI" id="CHEBI:58359"/>
        <dbReference type="EC" id="3.5.1.2"/>
    </reaction>
</comment>
<comment type="pathway">
    <text evidence="1">Purine metabolism; IMP biosynthesis via de novo pathway; 5-amino-1-(5-phospho-D-ribosyl)imidazole from N(2)-formyl-N(1)-(5-phospho-D-ribosyl)glycinamide: step 1/2.</text>
</comment>
<comment type="subunit">
    <text evidence="1">Part of the FGAM synthase complex composed of 1 PurL, 1 PurQ and 2 PurS subunits.</text>
</comment>
<comment type="subcellular location">
    <subcellularLocation>
        <location evidence="1">Cytoplasm</location>
    </subcellularLocation>
</comment>
<accession>Q5HQA2</accession>
<keyword id="KW-0067">ATP-binding</keyword>
<keyword id="KW-0963">Cytoplasm</keyword>
<keyword id="KW-0315">Glutamine amidotransferase</keyword>
<keyword id="KW-0378">Hydrolase</keyword>
<keyword id="KW-0436">Ligase</keyword>
<keyword id="KW-0547">Nucleotide-binding</keyword>
<keyword id="KW-0658">Purine biosynthesis</keyword>
<keyword id="KW-1185">Reference proteome</keyword>
<dbReference type="EC" id="6.3.5.3" evidence="1"/>
<dbReference type="EC" id="3.5.1.2" evidence="1"/>
<dbReference type="EMBL" id="CP000029">
    <property type="protein sequence ID" value="AAW53999.1"/>
    <property type="molecule type" value="Genomic_DNA"/>
</dbReference>
<dbReference type="RefSeq" id="WP_001831727.1">
    <property type="nucleotide sequence ID" value="NC_002976.3"/>
</dbReference>
<dbReference type="SMR" id="Q5HQA2"/>
<dbReference type="STRING" id="176279.SERP0653"/>
<dbReference type="GeneID" id="50019094"/>
<dbReference type="KEGG" id="ser:SERP0653"/>
<dbReference type="eggNOG" id="COG0047">
    <property type="taxonomic scope" value="Bacteria"/>
</dbReference>
<dbReference type="HOGENOM" id="CLU_001031_3_1_9"/>
<dbReference type="UniPathway" id="UPA00074">
    <property type="reaction ID" value="UER00128"/>
</dbReference>
<dbReference type="Proteomes" id="UP000000531">
    <property type="component" value="Chromosome"/>
</dbReference>
<dbReference type="GO" id="GO:0005737">
    <property type="term" value="C:cytoplasm"/>
    <property type="evidence" value="ECO:0007669"/>
    <property type="project" value="UniProtKB-SubCell"/>
</dbReference>
<dbReference type="GO" id="GO:0005524">
    <property type="term" value="F:ATP binding"/>
    <property type="evidence" value="ECO:0007669"/>
    <property type="project" value="UniProtKB-KW"/>
</dbReference>
<dbReference type="GO" id="GO:0004359">
    <property type="term" value="F:glutaminase activity"/>
    <property type="evidence" value="ECO:0007669"/>
    <property type="project" value="UniProtKB-EC"/>
</dbReference>
<dbReference type="GO" id="GO:0004642">
    <property type="term" value="F:phosphoribosylformylglycinamidine synthase activity"/>
    <property type="evidence" value="ECO:0007669"/>
    <property type="project" value="UniProtKB-UniRule"/>
</dbReference>
<dbReference type="GO" id="GO:0006189">
    <property type="term" value="P:'de novo' IMP biosynthetic process"/>
    <property type="evidence" value="ECO:0007669"/>
    <property type="project" value="UniProtKB-UniRule"/>
</dbReference>
<dbReference type="CDD" id="cd01740">
    <property type="entry name" value="GATase1_FGAR_AT"/>
    <property type="match status" value="1"/>
</dbReference>
<dbReference type="Gene3D" id="3.40.50.880">
    <property type="match status" value="1"/>
</dbReference>
<dbReference type="HAMAP" id="MF_00421">
    <property type="entry name" value="PurQ"/>
    <property type="match status" value="1"/>
</dbReference>
<dbReference type="InterPro" id="IPR029062">
    <property type="entry name" value="Class_I_gatase-like"/>
</dbReference>
<dbReference type="InterPro" id="IPR010075">
    <property type="entry name" value="PRibForGlyAmidine_synth_PurQ"/>
</dbReference>
<dbReference type="NCBIfam" id="TIGR01737">
    <property type="entry name" value="FGAM_synth_I"/>
    <property type="match status" value="1"/>
</dbReference>
<dbReference type="NCBIfam" id="NF002957">
    <property type="entry name" value="PRK03619.1"/>
    <property type="match status" value="1"/>
</dbReference>
<dbReference type="PANTHER" id="PTHR47552">
    <property type="entry name" value="PHOSPHORIBOSYLFORMYLGLYCINAMIDINE SYNTHASE SUBUNIT PURQ"/>
    <property type="match status" value="1"/>
</dbReference>
<dbReference type="PANTHER" id="PTHR47552:SF1">
    <property type="entry name" value="PHOSPHORIBOSYLFORMYLGLYCINAMIDINE SYNTHASE SUBUNIT PURQ"/>
    <property type="match status" value="1"/>
</dbReference>
<dbReference type="Pfam" id="PF13507">
    <property type="entry name" value="GATase_5"/>
    <property type="match status" value="1"/>
</dbReference>
<dbReference type="PIRSF" id="PIRSF001586">
    <property type="entry name" value="FGAM_synth_I"/>
    <property type="match status" value="1"/>
</dbReference>
<dbReference type="SMART" id="SM01211">
    <property type="entry name" value="GATase_5"/>
    <property type="match status" value="1"/>
</dbReference>
<dbReference type="SUPFAM" id="SSF52317">
    <property type="entry name" value="Class I glutamine amidotransferase-like"/>
    <property type="match status" value="1"/>
</dbReference>
<dbReference type="PROSITE" id="PS51273">
    <property type="entry name" value="GATASE_TYPE_1"/>
    <property type="match status" value="1"/>
</dbReference>
<proteinExistence type="inferred from homology"/>